<comment type="function">
    <text evidence="1">Produces ATP from ADP in the presence of a proton gradient across the membrane. The alpha chain is a regulatory subunit.</text>
</comment>
<comment type="catalytic activity">
    <reaction evidence="1">
        <text>ATP + H2O + 4 H(+)(in) = ADP + phosphate + 5 H(+)(out)</text>
        <dbReference type="Rhea" id="RHEA:57720"/>
        <dbReference type="ChEBI" id="CHEBI:15377"/>
        <dbReference type="ChEBI" id="CHEBI:15378"/>
        <dbReference type="ChEBI" id="CHEBI:30616"/>
        <dbReference type="ChEBI" id="CHEBI:43474"/>
        <dbReference type="ChEBI" id="CHEBI:456216"/>
        <dbReference type="EC" id="7.1.2.2"/>
    </reaction>
</comment>
<comment type="subunit">
    <text evidence="1">F-type ATPases have 2 components, CF(1) - the catalytic core - and CF(0) - the membrane proton channel. CF(1) has five subunits: alpha(3), beta(3), gamma(1), delta(1), epsilon(1). CF(0) has three main subunits: a(1), b(2) and c(9-12). The alpha and beta chains form an alternating ring which encloses part of the gamma chain. CF(1) is attached to CF(0) by a central stalk formed by the gamma and epsilon chains, while a peripheral stalk is formed by the delta and b chains.</text>
</comment>
<comment type="subcellular location">
    <subcellularLocation>
        <location evidence="1">Cell membrane</location>
        <topology evidence="1">Peripheral membrane protein</topology>
    </subcellularLocation>
</comment>
<comment type="similarity">
    <text evidence="1">Belongs to the ATPase alpha/beta chains family.</text>
</comment>
<name>ATPA_CLOK5</name>
<feature type="chain" id="PRO_1000086871" description="ATP synthase subunit alpha">
    <location>
        <begin position="1"/>
        <end position="504"/>
    </location>
</feature>
<feature type="binding site" evidence="1">
    <location>
        <begin position="169"/>
        <end position="176"/>
    </location>
    <ligand>
        <name>ATP</name>
        <dbReference type="ChEBI" id="CHEBI:30616"/>
    </ligand>
</feature>
<feature type="site" description="Required for activity" evidence="1">
    <location>
        <position position="362"/>
    </location>
</feature>
<dbReference type="EC" id="7.1.2.2" evidence="1"/>
<dbReference type="EMBL" id="CP000673">
    <property type="protein sequence ID" value="EDK35675.1"/>
    <property type="molecule type" value="Genomic_DNA"/>
</dbReference>
<dbReference type="RefSeq" id="WP_012104008.1">
    <property type="nucleotide sequence ID" value="NC_009706.1"/>
</dbReference>
<dbReference type="SMR" id="A5N3H9"/>
<dbReference type="STRING" id="431943.CKL_3690"/>
<dbReference type="KEGG" id="ckl:CKL_3690"/>
<dbReference type="eggNOG" id="COG0056">
    <property type="taxonomic scope" value="Bacteria"/>
</dbReference>
<dbReference type="HOGENOM" id="CLU_010091_2_1_9"/>
<dbReference type="Proteomes" id="UP000002411">
    <property type="component" value="Chromosome"/>
</dbReference>
<dbReference type="GO" id="GO:0005886">
    <property type="term" value="C:plasma membrane"/>
    <property type="evidence" value="ECO:0007669"/>
    <property type="project" value="UniProtKB-SubCell"/>
</dbReference>
<dbReference type="GO" id="GO:0045259">
    <property type="term" value="C:proton-transporting ATP synthase complex"/>
    <property type="evidence" value="ECO:0007669"/>
    <property type="project" value="UniProtKB-KW"/>
</dbReference>
<dbReference type="GO" id="GO:0043531">
    <property type="term" value="F:ADP binding"/>
    <property type="evidence" value="ECO:0007669"/>
    <property type="project" value="TreeGrafter"/>
</dbReference>
<dbReference type="GO" id="GO:0005524">
    <property type="term" value="F:ATP binding"/>
    <property type="evidence" value="ECO:0007669"/>
    <property type="project" value="UniProtKB-UniRule"/>
</dbReference>
<dbReference type="GO" id="GO:0046933">
    <property type="term" value="F:proton-transporting ATP synthase activity, rotational mechanism"/>
    <property type="evidence" value="ECO:0007669"/>
    <property type="project" value="UniProtKB-UniRule"/>
</dbReference>
<dbReference type="CDD" id="cd18113">
    <property type="entry name" value="ATP-synt_F1_alpha_C"/>
    <property type="match status" value="1"/>
</dbReference>
<dbReference type="CDD" id="cd18116">
    <property type="entry name" value="ATP-synt_F1_alpha_N"/>
    <property type="match status" value="1"/>
</dbReference>
<dbReference type="CDD" id="cd01132">
    <property type="entry name" value="F1-ATPase_alpha_CD"/>
    <property type="match status" value="1"/>
</dbReference>
<dbReference type="FunFam" id="1.20.150.20:FF:000001">
    <property type="entry name" value="ATP synthase subunit alpha"/>
    <property type="match status" value="1"/>
</dbReference>
<dbReference type="FunFam" id="2.40.30.20:FF:000001">
    <property type="entry name" value="ATP synthase subunit alpha"/>
    <property type="match status" value="1"/>
</dbReference>
<dbReference type="FunFam" id="3.40.50.300:FF:000002">
    <property type="entry name" value="ATP synthase subunit alpha"/>
    <property type="match status" value="1"/>
</dbReference>
<dbReference type="Gene3D" id="2.40.30.20">
    <property type="match status" value="1"/>
</dbReference>
<dbReference type="Gene3D" id="1.20.150.20">
    <property type="entry name" value="ATP synthase alpha/beta chain, C-terminal domain"/>
    <property type="match status" value="1"/>
</dbReference>
<dbReference type="Gene3D" id="3.40.50.300">
    <property type="entry name" value="P-loop containing nucleotide triphosphate hydrolases"/>
    <property type="match status" value="1"/>
</dbReference>
<dbReference type="HAMAP" id="MF_01346">
    <property type="entry name" value="ATP_synth_alpha_bact"/>
    <property type="match status" value="1"/>
</dbReference>
<dbReference type="InterPro" id="IPR023366">
    <property type="entry name" value="ATP_synth_asu-like_sf"/>
</dbReference>
<dbReference type="InterPro" id="IPR000793">
    <property type="entry name" value="ATP_synth_asu_C"/>
</dbReference>
<dbReference type="InterPro" id="IPR038376">
    <property type="entry name" value="ATP_synth_asu_C_sf"/>
</dbReference>
<dbReference type="InterPro" id="IPR033732">
    <property type="entry name" value="ATP_synth_F1_a_nt-bd_dom"/>
</dbReference>
<dbReference type="InterPro" id="IPR005294">
    <property type="entry name" value="ATP_synth_F1_asu"/>
</dbReference>
<dbReference type="InterPro" id="IPR020003">
    <property type="entry name" value="ATPase_a/bsu_AS"/>
</dbReference>
<dbReference type="InterPro" id="IPR004100">
    <property type="entry name" value="ATPase_F1/V1/A1_a/bsu_N"/>
</dbReference>
<dbReference type="InterPro" id="IPR036121">
    <property type="entry name" value="ATPase_F1/V1/A1_a/bsu_N_sf"/>
</dbReference>
<dbReference type="InterPro" id="IPR000194">
    <property type="entry name" value="ATPase_F1/V1/A1_a/bsu_nucl-bd"/>
</dbReference>
<dbReference type="InterPro" id="IPR027417">
    <property type="entry name" value="P-loop_NTPase"/>
</dbReference>
<dbReference type="NCBIfam" id="TIGR00962">
    <property type="entry name" value="atpA"/>
    <property type="match status" value="1"/>
</dbReference>
<dbReference type="NCBIfam" id="NF009884">
    <property type="entry name" value="PRK13343.1"/>
    <property type="match status" value="1"/>
</dbReference>
<dbReference type="PANTHER" id="PTHR48082">
    <property type="entry name" value="ATP SYNTHASE SUBUNIT ALPHA, MITOCHONDRIAL"/>
    <property type="match status" value="1"/>
</dbReference>
<dbReference type="PANTHER" id="PTHR48082:SF2">
    <property type="entry name" value="ATP SYNTHASE SUBUNIT ALPHA, MITOCHONDRIAL"/>
    <property type="match status" value="1"/>
</dbReference>
<dbReference type="Pfam" id="PF00006">
    <property type="entry name" value="ATP-synt_ab"/>
    <property type="match status" value="1"/>
</dbReference>
<dbReference type="Pfam" id="PF00306">
    <property type="entry name" value="ATP-synt_ab_C"/>
    <property type="match status" value="1"/>
</dbReference>
<dbReference type="Pfam" id="PF02874">
    <property type="entry name" value="ATP-synt_ab_N"/>
    <property type="match status" value="1"/>
</dbReference>
<dbReference type="PIRSF" id="PIRSF039088">
    <property type="entry name" value="F_ATPase_subunit_alpha"/>
    <property type="match status" value="1"/>
</dbReference>
<dbReference type="SUPFAM" id="SSF47917">
    <property type="entry name" value="C-terminal domain of alpha and beta subunits of F1 ATP synthase"/>
    <property type="match status" value="1"/>
</dbReference>
<dbReference type="SUPFAM" id="SSF50615">
    <property type="entry name" value="N-terminal domain of alpha and beta subunits of F1 ATP synthase"/>
    <property type="match status" value="1"/>
</dbReference>
<dbReference type="SUPFAM" id="SSF52540">
    <property type="entry name" value="P-loop containing nucleoside triphosphate hydrolases"/>
    <property type="match status" value="1"/>
</dbReference>
<dbReference type="PROSITE" id="PS00152">
    <property type="entry name" value="ATPASE_ALPHA_BETA"/>
    <property type="match status" value="1"/>
</dbReference>
<proteinExistence type="inferred from homology"/>
<gene>
    <name evidence="1" type="primary">atpA</name>
    <name type="ordered locus">CKL_3690</name>
</gene>
<evidence type="ECO:0000255" key="1">
    <source>
        <dbReference type="HAMAP-Rule" id="MF_01346"/>
    </source>
</evidence>
<protein>
    <recommendedName>
        <fullName evidence="1">ATP synthase subunit alpha</fullName>
        <ecNumber evidence="1">7.1.2.2</ecNumber>
    </recommendedName>
    <alternativeName>
        <fullName evidence="1">ATP synthase F1 sector subunit alpha</fullName>
    </alternativeName>
    <alternativeName>
        <fullName evidence="1">F-ATPase subunit alpha</fullName>
    </alternativeName>
</protein>
<organism>
    <name type="scientific">Clostridium kluyveri (strain ATCC 8527 / DSM 555 / NBRC 12016 / NCIMB 10680 / K1)</name>
    <dbReference type="NCBI Taxonomy" id="431943"/>
    <lineage>
        <taxon>Bacteria</taxon>
        <taxon>Bacillati</taxon>
        <taxon>Bacillota</taxon>
        <taxon>Clostridia</taxon>
        <taxon>Eubacteriales</taxon>
        <taxon>Clostridiaceae</taxon>
        <taxon>Clostridium</taxon>
    </lineage>
</organism>
<reference key="1">
    <citation type="journal article" date="2008" name="Proc. Natl. Acad. Sci. U.S.A.">
        <title>The genome of Clostridium kluyveri, a strict anaerobe with unique metabolic features.</title>
        <authorList>
            <person name="Seedorf H."/>
            <person name="Fricke W.F."/>
            <person name="Veith B."/>
            <person name="Brueggemann H."/>
            <person name="Liesegang H."/>
            <person name="Strittmatter A."/>
            <person name="Miethke M."/>
            <person name="Buckel W."/>
            <person name="Hinderberger J."/>
            <person name="Li F."/>
            <person name="Hagemeier C."/>
            <person name="Thauer R.K."/>
            <person name="Gottschalk G."/>
        </authorList>
    </citation>
    <scope>NUCLEOTIDE SEQUENCE [LARGE SCALE GENOMIC DNA]</scope>
    <source>
        <strain>ATCC 8527 / DSM 555 / NBRC 12016 / NCIMB 10680 / K1</strain>
    </source>
</reference>
<accession>A5N3H9</accession>
<sequence length="504" mass="55416">MNVKPEEITSIIKSQIEKYEKKIETVDSGTIIQIGDGIARVYGLNGCMAGELLEFPNDVYAMALNLEQDNVGCVLLGSQEGIKEGNTVKRTGKVVEVPVGENIIGRVVNSLGHPIDGKGAISTTETRAVELVAPGVITRQAVKQPLQTGIKAIDAMIPIGRGQRELIIGDRQTGKTAIAMDTIINQKGKDVICIYVAIGQKQSTVAHIVNNLIETNAMDYTIVVSAAASESAPLQYIAPYAGCSMGEYFMNKGKDVLIVYDDLSKHAVAYRAMSLLLRRPPRREAYPGDVFYLHSRLLERAAKLSDKLGGGSLTALPIIETLAGDVTAYIPTNVISITDGQIFLETELFYSGQRPAINAGISVSRVGGNAQIKAMKQVAGTLRIDLAQYRELASFAQFGSDLDKESKRTLEKGKRLTEILKQPQYKPMAVEKQVMILFAASRNYIMDIPVERISEFEEEFLDYMDTHHREIGDEIKEKQVISDELSDKLRNAIEEFKKIFLIEG</sequence>
<keyword id="KW-0066">ATP synthesis</keyword>
<keyword id="KW-0067">ATP-binding</keyword>
<keyword id="KW-1003">Cell membrane</keyword>
<keyword id="KW-0139">CF(1)</keyword>
<keyword id="KW-0375">Hydrogen ion transport</keyword>
<keyword id="KW-0406">Ion transport</keyword>
<keyword id="KW-0472">Membrane</keyword>
<keyword id="KW-0547">Nucleotide-binding</keyword>
<keyword id="KW-1185">Reference proteome</keyword>
<keyword id="KW-1278">Translocase</keyword>
<keyword id="KW-0813">Transport</keyword>